<protein>
    <recommendedName>
        <fullName>Putative cysteine-rich repeat secretory protein 61</fullName>
    </recommendedName>
</protein>
<organism>
    <name type="scientific">Arabidopsis thaliana</name>
    <name type="common">Mouse-ear cress</name>
    <dbReference type="NCBI Taxonomy" id="3702"/>
    <lineage>
        <taxon>Eukaryota</taxon>
        <taxon>Viridiplantae</taxon>
        <taxon>Streptophyta</taxon>
        <taxon>Embryophyta</taxon>
        <taxon>Tracheophyta</taxon>
        <taxon>Spermatophyta</taxon>
        <taxon>Magnoliopsida</taxon>
        <taxon>eudicotyledons</taxon>
        <taxon>Gunneridae</taxon>
        <taxon>Pentapetalae</taxon>
        <taxon>rosids</taxon>
        <taxon>malvids</taxon>
        <taxon>Brassicales</taxon>
        <taxon>Brassicaceae</taxon>
        <taxon>Camelineae</taxon>
        <taxon>Arabidopsis</taxon>
    </lineage>
</organism>
<sequence>MSSSFIPKRIALVLNLAMVAIQVFFIRSVSSMNETNSYLYHKCSEAEGKYKSKSPYEGNLNFLTNDMYKDTFVRGFVYAYHGDDPNTVYILLQCRGDSYGSKCGSCLSTATSELRRRCPMNKAGIVWFDKCLLKISPTAFFEKIDDKNKFYMYSTKKVSDPALFNVKTKALLTELTAKATRRSDKLLLYETGEMKLGKMKLYGMVQCRRDLWFTVCKTCLDKIIGELPKCCDGKEGGRVLSGSCNFRYEIYPFLDTVR</sequence>
<proteinExistence type="inferred from homology"/>
<feature type="signal peptide" evidence="1">
    <location>
        <begin position="1"/>
        <end position="31"/>
    </location>
</feature>
<feature type="chain" id="PRO_0000296668" description="Putative cysteine-rich repeat secretory protein 61">
    <location>
        <begin position="32"/>
        <end position="258"/>
    </location>
</feature>
<feature type="domain" description="Gnk2-homologous 1" evidence="2">
    <location>
        <begin position="38"/>
        <end position="140"/>
    </location>
</feature>
<feature type="domain" description="Gnk2-homologous 2" evidence="2">
    <location>
        <begin position="146"/>
        <end position="253"/>
    </location>
</feature>
<dbReference type="EMBL" id="AL137081">
    <property type="protein sequence ID" value="CAB68169.1"/>
    <property type="molecule type" value="Genomic_DNA"/>
</dbReference>
<dbReference type="EMBL" id="CP002686">
    <property type="protein sequence ID" value="AEE79768.1"/>
    <property type="molecule type" value="Genomic_DNA"/>
</dbReference>
<dbReference type="PIR" id="T45991">
    <property type="entry name" value="T45991"/>
</dbReference>
<dbReference type="RefSeq" id="NP_191390.1">
    <property type="nucleotide sequence ID" value="NM_115693.2"/>
</dbReference>
<dbReference type="SMR" id="Q9M2I5"/>
<dbReference type="STRING" id="3702.Q9M2I5"/>
<dbReference type="PaxDb" id="3702-AT3G58310.1"/>
<dbReference type="ProteomicsDB" id="222729"/>
<dbReference type="EnsemblPlants" id="AT3G58310.1">
    <property type="protein sequence ID" value="AT3G58310.1"/>
    <property type="gene ID" value="AT3G58310"/>
</dbReference>
<dbReference type="GeneID" id="825000"/>
<dbReference type="Gramene" id="AT3G58310.1">
    <property type="protein sequence ID" value="AT3G58310.1"/>
    <property type="gene ID" value="AT3G58310"/>
</dbReference>
<dbReference type="KEGG" id="ath:AT3G58310"/>
<dbReference type="Araport" id="AT3G58310"/>
<dbReference type="TAIR" id="AT3G58310"/>
<dbReference type="eggNOG" id="ENOG502QPWH">
    <property type="taxonomic scope" value="Eukaryota"/>
</dbReference>
<dbReference type="HOGENOM" id="CLU_000288_35_0_1"/>
<dbReference type="InParanoid" id="Q9M2I5"/>
<dbReference type="OMA" id="GSCTFRY"/>
<dbReference type="PhylomeDB" id="Q9M2I5"/>
<dbReference type="PRO" id="PR:Q9M2I5"/>
<dbReference type="Proteomes" id="UP000006548">
    <property type="component" value="Chromosome 3"/>
</dbReference>
<dbReference type="ExpressionAtlas" id="Q9M2I5">
    <property type="expression patterns" value="baseline"/>
</dbReference>
<dbReference type="GO" id="GO:0005576">
    <property type="term" value="C:extracellular region"/>
    <property type="evidence" value="ECO:0007669"/>
    <property type="project" value="UniProtKB-SubCell"/>
</dbReference>
<dbReference type="CDD" id="cd23509">
    <property type="entry name" value="Gnk2-like"/>
    <property type="match status" value="2"/>
</dbReference>
<dbReference type="FunFam" id="3.30.430.20:FF:000002">
    <property type="entry name" value="Cysteine-rich receptor-like protein kinase 10"/>
    <property type="match status" value="1"/>
</dbReference>
<dbReference type="Gene3D" id="3.30.430.20">
    <property type="entry name" value="Gnk2 domain, C-X8-C-X2-C motif"/>
    <property type="match status" value="2"/>
</dbReference>
<dbReference type="InterPro" id="IPR050581">
    <property type="entry name" value="CRR_secretory_protein"/>
</dbReference>
<dbReference type="InterPro" id="IPR002902">
    <property type="entry name" value="GNK2"/>
</dbReference>
<dbReference type="InterPro" id="IPR038408">
    <property type="entry name" value="GNK2_sf"/>
</dbReference>
<dbReference type="PANTHER" id="PTHR32411">
    <property type="entry name" value="CYSTEINE-RICH REPEAT SECRETORY PROTEIN 38-RELATED"/>
    <property type="match status" value="1"/>
</dbReference>
<dbReference type="PANTHER" id="PTHR32411:SF52">
    <property type="entry name" value="CYSTEINE-RICH REPEAT SECRETORY PROTEIN 61-RELATED"/>
    <property type="match status" value="1"/>
</dbReference>
<dbReference type="Pfam" id="PF01657">
    <property type="entry name" value="Stress-antifung"/>
    <property type="match status" value="2"/>
</dbReference>
<dbReference type="PROSITE" id="PS51473">
    <property type="entry name" value="GNK2"/>
    <property type="match status" value="2"/>
</dbReference>
<evidence type="ECO:0000255" key="1"/>
<evidence type="ECO:0000255" key="2">
    <source>
        <dbReference type="PROSITE-ProRule" id="PRU00806"/>
    </source>
</evidence>
<evidence type="ECO:0000305" key="3"/>
<keyword id="KW-1185">Reference proteome</keyword>
<keyword id="KW-0677">Repeat</keyword>
<keyword id="KW-0964">Secreted</keyword>
<keyword id="KW-0732">Signal</keyword>
<comment type="subcellular location">
    <subcellularLocation>
        <location evidence="3">Secreted</location>
    </subcellularLocation>
</comment>
<comment type="similarity">
    <text evidence="3">Belongs to the cysteine-rich repeat secretory protein family.</text>
</comment>
<reference key="1">
    <citation type="journal article" date="2000" name="Nature">
        <title>Sequence and analysis of chromosome 3 of the plant Arabidopsis thaliana.</title>
        <authorList>
            <person name="Salanoubat M."/>
            <person name="Lemcke K."/>
            <person name="Rieger M."/>
            <person name="Ansorge W."/>
            <person name="Unseld M."/>
            <person name="Fartmann B."/>
            <person name="Valle G."/>
            <person name="Bloecker H."/>
            <person name="Perez-Alonso M."/>
            <person name="Obermaier B."/>
            <person name="Delseny M."/>
            <person name="Boutry M."/>
            <person name="Grivell L.A."/>
            <person name="Mache R."/>
            <person name="Puigdomenech P."/>
            <person name="De Simone V."/>
            <person name="Choisne N."/>
            <person name="Artiguenave F."/>
            <person name="Robert C."/>
            <person name="Brottier P."/>
            <person name="Wincker P."/>
            <person name="Cattolico L."/>
            <person name="Weissenbach J."/>
            <person name="Saurin W."/>
            <person name="Quetier F."/>
            <person name="Schaefer M."/>
            <person name="Mueller-Auer S."/>
            <person name="Gabel C."/>
            <person name="Fuchs M."/>
            <person name="Benes V."/>
            <person name="Wurmbach E."/>
            <person name="Drzonek H."/>
            <person name="Erfle H."/>
            <person name="Jordan N."/>
            <person name="Bangert S."/>
            <person name="Wiedelmann R."/>
            <person name="Kranz H."/>
            <person name="Voss H."/>
            <person name="Holland R."/>
            <person name="Brandt P."/>
            <person name="Nyakatura G."/>
            <person name="Vezzi A."/>
            <person name="D'Angelo M."/>
            <person name="Pallavicini A."/>
            <person name="Toppo S."/>
            <person name="Simionati B."/>
            <person name="Conrad A."/>
            <person name="Hornischer K."/>
            <person name="Kauer G."/>
            <person name="Loehnert T.-H."/>
            <person name="Nordsiek G."/>
            <person name="Reichelt J."/>
            <person name="Scharfe M."/>
            <person name="Schoen O."/>
            <person name="Bargues M."/>
            <person name="Terol J."/>
            <person name="Climent J."/>
            <person name="Navarro P."/>
            <person name="Collado C."/>
            <person name="Perez-Perez A."/>
            <person name="Ottenwaelder B."/>
            <person name="Duchemin D."/>
            <person name="Cooke R."/>
            <person name="Laudie M."/>
            <person name="Berger-Llauro C."/>
            <person name="Purnelle B."/>
            <person name="Masuy D."/>
            <person name="de Haan M."/>
            <person name="Maarse A.C."/>
            <person name="Alcaraz J.-P."/>
            <person name="Cottet A."/>
            <person name="Casacuberta E."/>
            <person name="Monfort A."/>
            <person name="Argiriou A."/>
            <person name="Flores M."/>
            <person name="Liguori R."/>
            <person name="Vitale D."/>
            <person name="Mannhaupt G."/>
            <person name="Haase D."/>
            <person name="Schoof H."/>
            <person name="Rudd S."/>
            <person name="Zaccaria P."/>
            <person name="Mewes H.-W."/>
            <person name="Mayer K.F.X."/>
            <person name="Kaul S."/>
            <person name="Town C.D."/>
            <person name="Koo H.L."/>
            <person name="Tallon L.J."/>
            <person name="Jenkins J."/>
            <person name="Rooney T."/>
            <person name="Rizzo M."/>
            <person name="Walts A."/>
            <person name="Utterback T."/>
            <person name="Fujii C.Y."/>
            <person name="Shea T.P."/>
            <person name="Creasy T.H."/>
            <person name="Haas B."/>
            <person name="Maiti R."/>
            <person name="Wu D."/>
            <person name="Peterson J."/>
            <person name="Van Aken S."/>
            <person name="Pai G."/>
            <person name="Militscher J."/>
            <person name="Sellers P."/>
            <person name="Gill J.E."/>
            <person name="Feldblyum T.V."/>
            <person name="Preuss D."/>
            <person name="Lin X."/>
            <person name="Nierman W.C."/>
            <person name="Salzberg S.L."/>
            <person name="White O."/>
            <person name="Venter J.C."/>
            <person name="Fraser C.M."/>
            <person name="Kaneko T."/>
            <person name="Nakamura Y."/>
            <person name="Sato S."/>
            <person name="Kato T."/>
            <person name="Asamizu E."/>
            <person name="Sasamoto S."/>
            <person name="Kimura T."/>
            <person name="Idesawa K."/>
            <person name="Kawashima K."/>
            <person name="Kishida Y."/>
            <person name="Kiyokawa C."/>
            <person name="Kohara M."/>
            <person name="Matsumoto M."/>
            <person name="Matsuno A."/>
            <person name="Muraki A."/>
            <person name="Nakayama S."/>
            <person name="Nakazaki N."/>
            <person name="Shinpo S."/>
            <person name="Takeuchi C."/>
            <person name="Wada T."/>
            <person name="Watanabe A."/>
            <person name="Yamada M."/>
            <person name="Yasuda M."/>
            <person name="Tabata S."/>
        </authorList>
    </citation>
    <scope>NUCLEOTIDE SEQUENCE [LARGE SCALE GENOMIC DNA]</scope>
    <source>
        <strain>cv. Columbia</strain>
    </source>
</reference>
<reference key="2">
    <citation type="journal article" date="2017" name="Plant J.">
        <title>Araport11: a complete reannotation of the Arabidopsis thaliana reference genome.</title>
        <authorList>
            <person name="Cheng C.Y."/>
            <person name="Krishnakumar V."/>
            <person name="Chan A.P."/>
            <person name="Thibaud-Nissen F."/>
            <person name="Schobel S."/>
            <person name="Town C.D."/>
        </authorList>
    </citation>
    <scope>GENOME REANNOTATION</scope>
    <source>
        <strain>cv. Columbia</strain>
    </source>
</reference>
<name>CRR61_ARATH</name>
<accession>Q9M2I5</accession>
<gene>
    <name type="primary">CRRSP61</name>
    <name type="ordered locus">At3g58310</name>
    <name type="ORF">F9D24.220</name>
</gene>